<protein>
    <recommendedName>
        <fullName evidence="1">Chromosomal replication initiator protein DnaA</fullName>
    </recommendedName>
</protein>
<dbReference type="EMBL" id="CP000921">
    <property type="protein sequence ID" value="ACO23662.1"/>
    <property type="molecule type" value="Genomic_DNA"/>
</dbReference>
<dbReference type="RefSeq" id="WP_000660616.1">
    <property type="nucleotide sequence ID" value="NC_012469.1"/>
</dbReference>
<dbReference type="SMR" id="C1CU44"/>
<dbReference type="KEGG" id="snt:SPT_0001"/>
<dbReference type="HOGENOM" id="CLU_026910_3_1_9"/>
<dbReference type="GO" id="GO:0005737">
    <property type="term" value="C:cytoplasm"/>
    <property type="evidence" value="ECO:0007669"/>
    <property type="project" value="UniProtKB-SubCell"/>
</dbReference>
<dbReference type="GO" id="GO:0005886">
    <property type="term" value="C:plasma membrane"/>
    <property type="evidence" value="ECO:0007669"/>
    <property type="project" value="TreeGrafter"/>
</dbReference>
<dbReference type="GO" id="GO:0005524">
    <property type="term" value="F:ATP binding"/>
    <property type="evidence" value="ECO:0007669"/>
    <property type="project" value="UniProtKB-UniRule"/>
</dbReference>
<dbReference type="GO" id="GO:0016887">
    <property type="term" value="F:ATP hydrolysis activity"/>
    <property type="evidence" value="ECO:0007669"/>
    <property type="project" value="InterPro"/>
</dbReference>
<dbReference type="GO" id="GO:0003688">
    <property type="term" value="F:DNA replication origin binding"/>
    <property type="evidence" value="ECO:0007669"/>
    <property type="project" value="UniProtKB-UniRule"/>
</dbReference>
<dbReference type="GO" id="GO:0008289">
    <property type="term" value="F:lipid binding"/>
    <property type="evidence" value="ECO:0007669"/>
    <property type="project" value="UniProtKB-KW"/>
</dbReference>
<dbReference type="GO" id="GO:0006270">
    <property type="term" value="P:DNA replication initiation"/>
    <property type="evidence" value="ECO:0007669"/>
    <property type="project" value="UniProtKB-UniRule"/>
</dbReference>
<dbReference type="GO" id="GO:0006275">
    <property type="term" value="P:regulation of DNA replication"/>
    <property type="evidence" value="ECO:0007669"/>
    <property type="project" value="UniProtKB-UniRule"/>
</dbReference>
<dbReference type="CDD" id="cd00009">
    <property type="entry name" value="AAA"/>
    <property type="match status" value="1"/>
</dbReference>
<dbReference type="CDD" id="cd06571">
    <property type="entry name" value="Bac_DnaA_C"/>
    <property type="match status" value="1"/>
</dbReference>
<dbReference type="FunFam" id="1.10.1750.10:FF:000002">
    <property type="entry name" value="Chromosomal replication initiator protein DnaA"/>
    <property type="match status" value="1"/>
</dbReference>
<dbReference type="FunFam" id="1.10.8.60:FF:000129">
    <property type="entry name" value="Chromosomal replication initiator protein DnaA"/>
    <property type="match status" value="1"/>
</dbReference>
<dbReference type="FunFam" id="3.40.50.300:FF:000668">
    <property type="entry name" value="Chromosomal replication initiator protein DnaA"/>
    <property type="match status" value="1"/>
</dbReference>
<dbReference type="Gene3D" id="1.10.1750.10">
    <property type="match status" value="1"/>
</dbReference>
<dbReference type="Gene3D" id="1.10.8.60">
    <property type="match status" value="1"/>
</dbReference>
<dbReference type="Gene3D" id="3.40.50.300">
    <property type="entry name" value="P-loop containing nucleotide triphosphate hydrolases"/>
    <property type="match status" value="1"/>
</dbReference>
<dbReference type="HAMAP" id="MF_00377">
    <property type="entry name" value="DnaA_bact"/>
    <property type="match status" value="1"/>
</dbReference>
<dbReference type="InterPro" id="IPR003593">
    <property type="entry name" value="AAA+_ATPase"/>
</dbReference>
<dbReference type="InterPro" id="IPR001957">
    <property type="entry name" value="Chromosome_initiator_DnaA"/>
</dbReference>
<dbReference type="InterPro" id="IPR020591">
    <property type="entry name" value="Chromosome_initiator_DnaA-like"/>
</dbReference>
<dbReference type="InterPro" id="IPR018312">
    <property type="entry name" value="Chromosome_initiator_DnaA_CS"/>
</dbReference>
<dbReference type="InterPro" id="IPR013159">
    <property type="entry name" value="DnaA_C"/>
</dbReference>
<dbReference type="InterPro" id="IPR013317">
    <property type="entry name" value="DnaA_dom"/>
</dbReference>
<dbReference type="InterPro" id="IPR027417">
    <property type="entry name" value="P-loop_NTPase"/>
</dbReference>
<dbReference type="InterPro" id="IPR010921">
    <property type="entry name" value="Trp_repressor/repl_initiator"/>
</dbReference>
<dbReference type="NCBIfam" id="TIGR00362">
    <property type="entry name" value="DnaA"/>
    <property type="match status" value="1"/>
</dbReference>
<dbReference type="PANTHER" id="PTHR30050">
    <property type="entry name" value="CHROMOSOMAL REPLICATION INITIATOR PROTEIN DNAA"/>
    <property type="match status" value="1"/>
</dbReference>
<dbReference type="PANTHER" id="PTHR30050:SF2">
    <property type="entry name" value="CHROMOSOMAL REPLICATION INITIATOR PROTEIN DNAA"/>
    <property type="match status" value="1"/>
</dbReference>
<dbReference type="Pfam" id="PF00308">
    <property type="entry name" value="Bac_DnaA"/>
    <property type="match status" value="1"/>
</dbReference>
<dbReference type="Pfam" id="PF08299">
    <property type="entry name" value="Bac_DnaA_C"/>
    <property type="match status" value="1"/>
</dbReference>
<dbReference type="PRINTS" id="PR00051">
    <property type="entry name" value="DNAA"/>
</dbReference>
<dbReference type="SMART" id="SM00382">
    <property type="entry name" value="AAA"/>
    <property type="match status" value="1"/>
</dbReference>
<dbReference type="SMART" id="SM00760">
    <property type="entry name" value="Bac_DnaA_C"/>
    <property type="match status" value="1"/>
</dbReference>
<dbReference type="SUPFAM" id="SSF52540">
    <property type="entry name" value="P-loop containing nucleoside triphosphate hydrolases"/>
    <property type="match status" value="1"/>
</dbReference>
<dbReference type="SUPFAM" id="SSF48295">
    <property type="entry name" value="TrpR-like"/>
    <property type="match status" value="1"/>
</dbReference>
<dbReference type="PROSITE" id="PS01008">
    <property type="entry name" value="DNAA"/>
    <property type="match status" value="1"/>
</dbReference>
<keyword id="KW-0067">ATP-binding</keyword>
<keyword id="KW-0963">Cytoplasm</keyword>
<keyword id="KW-0235">DNA replication</keyword>
<keyword id="KW-0238">DNA-binding</keyword>
<keyword id="KW-0446">Lipid-binding</keyword>
<keyword id="KW-0547">Nucleotide-binding</keyword>
<name>DNAA_STRZT</name>
<reference key="1">
    <citation type="journal article" date="2010" name="Genome Biol.">
        <title>Structure and dynamics of the pan-genome of Streptococcus pneumoniae and closely related species.</title>
        <authorList>
            <person name="Donati C."/>
            <person name="Hiller N.L."/>
            <person name="Tettelin H."/>
            <person name="Muzzi A."/>
            <person name="Croucher N.J."/>
            <person name="Angiuoli S.V."/>
            <person name="Oggioni M."/>
            <person name="Dunning Hotopp J.C."/>
            <person name="Hu F.Z."/>
            <person name="Riley D.R."/>
            <person name="Covacci A."/>
            <person name="Mitchell T.J."/>
            <person name="Bentley S.D."/>
            <person name="Kilian M."/>
            <person name="Ehrlich G.D."/>
            <person name="Rappuoli R."/>
            <person name="Moxon E.R."/>
            <person name="Masignani V."/>
        </authorList>
    </citation>
    <scope>NUCLEOTIDE SEQUENCE [LARGE SCALE GENOMIC DNA]</scope>
    <source>
        <strain>Taiwan19F-14</strain>
    </source>
</reference>
<comment type="function">
    <text evidence="1">Plays an essential role in the initiation and regulation of chromosomal replication. ATP-DnaA binds to the origin of replication (oriC) to initiate formation of the DNA replication initiation complex once per cell cycle. Binds the DnaA box (a 9 base pair repeat at the origin) and separates the double-stranded (ds)DNA. Forms a right-handed helical filament on oriC DNA; dsDNA binds to the exterior of the filament while single-stranded (ss)DNA is stabiized in the filament's interior. The ATP-DnaA-oriC complex binds and stabilizes one strand of the AT-rich DNA unwinding element (DUE), permitting loading of DNA polymerase. After initiation quickly degrades to an ADP-DnaA complex that is not apt for DNA replication. Binds acidic phospholipids.</text>
</comment>
<comment type="subunit">
    <text evidence="1">Oligomerizes as a right-handed, spiral filament on DNA at oriC.</text>
</comment>
<comment type="subcellular location">
    <subcellularLocation>
        <location evidence="1">Cytoplasm</location>
    </subcellularLocation>
</comment>
<comment type="domain">
    <text evidence="1">Domain I is involved in oligomerization and binding regulators, domain II is flexibile and of varying length in different bacteria, domain III forms the AAA+ region, while domain IV binds dsDNA.</text>
</comment>
<comment type="similarity">
    <text evidence="1">Belongs to the DnaA family.</text>
</comment>
<proteinExistence type="inferred from homology"/>
<gene>
    <name evidence="1" type="primary">dnaA</name>
    <name type="ordered locus">SPT_0001</name>
</gene>
<organism>
    <name type="scientific">Streptococcus pneumoniae (strain Taiwan19F-14)</name>
    <dbReference type="NCBI Taxonomy" id="487213"/>
    <lineage>
        <taxon>Bacteria</taxon>
        <taxon>Bacillati</taxon>
        <taxon>Bacillota</taxon>
        <taxon>Bacilli</taxon>
        <taxon>Lactobacillales</taxon>
        <taxon>Streptococcaceae</taxon>
        <taxon>Streptococcus</taxon>
    </lineage>
</organism>
<evidence type="ECO:0000255" key="1">
    <source>
        <dbReference type="HAMAP-Rule" id="MF_00377"/>
    </source>
</evidence>
<sequence length="453" mass="51810">MKEKQFWNRILEFAQERLTRSMYDFYAIQAELIKVEENVATIFLPRSEMEMVWEKQLKDIIVVAGFEIYDAEITPHYIFTKPQDTTSSQVEEATNLTLYDYSPKLVSIPYSDTGLKEKYTFDNFIQGDGNVWAVSAALAVSEDLALTYNPLFIYGGPGLGKTHLLNAIGNEILKNIPNARVKYIPAESFINDFLDHLRLGEMEKFKKTYRSLDLLLIDDIQSLSGKKVATQEEFFNTFNALHDKQKQIVLTSDRSPKHLEGLEERLVTRFSWGLTQTITPPDFETRIAILQSKTEHLGYNFQSDTLEYLAGQFDSNVRDLEGAINDITLIARVKKIKDITIDIAAEAIRARKQDVSQMLVIPIDKIQTEVGNFYGVSIKEMKGSRRLQNIVLARQVAMYLSRELTDNSLPKIGKEFGGKDHTTVIHAHVKIKSLIDQDDNLRLEIESIKKKIK</sequence>
<accession>C1CU44</accession>
<feature type="chain" id="PRO_1000189814" description="Chromosomal replication initiator protein DnaA">
    <location>
        <begin position="1"/>
        <end position="453"/>
    </location>
</feature>
<feature type="region of interest" description="Domain I, interacts with DnaA modulators" evidence="1">
    <location>
        <begin position="1"/>
        <end position="74"/>
    </location>
</feature>
<feature type="region of interest" description="Domain II" evidence="1">
    <location>
        <begin position="74"/>
        <end position="113"/>
    </location>
</feature>
<feature type="region of interest" description="Domain III, AAA+ region" evidence="1">
    <location>
        <begin position="114"/>
        <end position="331"/>
    </location>
</feature>
<feature type="region of interest" description="Domain IV, binds dsDNA" evidence="1">
    <location>
        <begin position="332"/>
        <end position="453"/>
    </location>
</feature>
<feature type="binding site" evidence="1">
    <location>
        <position position="158"/>
    </location>
    <ligand>
        <name>ATP</name>
        <dbReference type="ChEBI" id="CHEBI:30616"/>
    </ligand>
</feature>
<feature type="binding site" evidence="1">
    <location>
        <position position="160"/>
    </location>
    <ligand>
        <name>ATP</name>
        <dbReference type="ChEBI" id="CHEBI:30616"/>
    </ligand>
</feature>
<feature type="binding site" evidence="1">
    <location>
        <position position="161"/>
    </location>
    <ligand>
        <name>ATP</name>
        <dbReference type="ChEBI" id="CHEBI:30616"/>
    </ligand>
</feature>
<feature type="binding site" evidence="1">
    <location>
        <position position="162"/>
    </location>
    <ligand>
        <name>ATP</name>
        <dbReference type="ChEBI" id="CHEBI:30616"/>
    </ligand>
</feature>